<gene>
    <name evidence="1" type="primary">tsaD</name>
    <name type="synonym">gcp</name>
    <name type="ordered locus">BTH_II0616</name>
</gene>
<name>TSAD_BURTA</name>
<organism>
    <name type="scientific">Burkholderia thailandensis (strain ATCC 700388 / DSM 13276 / CCUG 48851 / CIP 106301 / E264)</name>
    <dbReference type="NCBI Taxonomy" id="271848"/>
    <lineage>
        <taxon>Bacteria</taxon>
        <taxon>Pseudomonadati</taxon>
        <taxon>Pseudomonadota</taxon>
        <taxon>Betaproteobacteria</taxon>
        <taxon>Burkholderiales</taxon>
        <taxon>Burkholderiaceae</taxon>
        <taxon>Burkholderia</taxon>
        <taxon>pseudomallei group</taxon>
    </lineage>
</organism>
<dbReference type="EC" id="2.3.1.234" evidence="1"/>
<dbReference type="EMBL" id="CP000085">
    <property type="protein sequence ID" value="ABC35738.1"/>
    <property type="molecule type" value="Genomic_DNA"/>
</dbReference>
<dbReference type="RefSeq" id="WP_009895739.1">
    <property type="nucleotide sequence ID" value="NZ_CP008786.1"/>
</dbReference>
<dbReference type="SMR" id="Q2T7N3"/>
<dbReference type="GeneID" id="45118107"/>
<dbReference type="KEGG" id="bte:BTH_II0616"/>
<dbReference type="HOGENOM" id="CLU_023208_0_2_4"/>
<dbReference type="Proteomes" id="UP000001930">
    <property type="component" value="Chromosome II"/>
</dbReference>
<dbReference type="GO" id="GO:0005737">
    <property type="term" value="C:cytoplasm"/>
    <property type="evidence" value="ECO:0007669"/>
    <property type="project" value="UniProtKB-SubCell"/>
</dbReference>
<dbReference type="GO" id="GO:0005506">
    <property type="term" value="F:iron ion binding"/>
    <property type="evidence" value="ECO:0007669"/>
    <property type="project" value="UniProtKB-UniRule"/>
</dbReference>
<dbReference type="GO" id="GO:0061711">
    <property type="term" value="F:N(6)-L-threonylcarbamoyladenine synthase activity"/>
    <property type="evidence" value="ECO:0007669"/>
    <property type="project" value="UniProtKB-EC"/>
</dbReference>
<dbReference type="GO" id="GO:0002949">
    <property type="term" value="P:tRNA threonylcarbamoyladenosine modification"/>
    <property type="evidence" value="ECO:0007669"/>
    <property type="project" value="UniProtKB-UniRule"/>
</dbReference>
<dbReference type="CDD" id="cd24133">
    <property type="entry name" value="ASKHA_NBD_TsaD_bac"/>
    <property type="match status" value="1"/>
</dbReference>
<dbReference type="FunFam" id="3.30.420.40:FF:000012">
    <property type="entry name" value="tRNA N6-adenosine threonylcarbamoyltransferase"/>
    <property type="match status" value="1"/>
</dbReference>
<dbReference type="FunFam" id="3.30.420.40:FF:000040">
    <property type="entry name" value="tRNA N6-adenosine threonylcarbamoyltransferase"/>
    <property type="match status" value="1"/>
</dbReference>
<dbReference type="Gene3D" id="3.30.420.40">
    <property type="match status" value="2"/>
</dbReference>
<dbReference type="HAMAP" id="MF_01445">
    <property type="entry name" value="TsaD"/>
    <property type="match status" value="1"/>
</dbReference>
<dbReference type="InterPro" id="IPR043129">
    <property type="entry name" value="ATPase_NBD"/>
</dbReference>
<dbReference type="InterPro" id="IPR000905">
    <property type="entry name" value="Gcp-like_dom"/>
</dbReference>
<dbReference type="InterPro" id="IPR017861">
    <property type="entry name" value="KAE1/TsaD"/>
</dbReference>
<dbReference type="InterPro" id="IPR022450">
    <property type="entry name" value="TsaD"/>
</dbReference>
<dbReference type="NCBIfam" id="TIGR00329">
    <property type="entry name" value="gcp_kae1"/>
    <property type="match status" value="1"/>
</dbReference>
<dbReference type="NCBIfam" id="TIGR03723">
    <property type="entry name" value="T6A_TsaD_YgjD"/>
    <property type="match status" value="1"/>
</dbReference>
<dbReference type="PANTHER" id="PTHR11735">
    <property type="entry name" value="TRNA N6-ADENOSINE THREONYLCARBAMOYLTRANSFERASE"/>
    <property type="match status" value="1"/>
</dbReference>
<dbReference type="PANTHER" id="PTHR11735:SF6">
    <property type="entry name" value="TRNA N6-ADENOSINE THREONYLCARBAMOYLTRANSFERASE, MITOCHONDRIAL"/>
    <property type="match status" value="1"/>
</dbReference>
<dbReference type="Pfam" id="PF00814">
    <property type="entry name" value="TsaD"/>
    <property type="match status" value="1"/>
</dbReference>
<dbReference type="PRINTS" id="PR00789">
    <property type="entry name" value="OSIALOPTASE"/>
</dbReference>
<dbReference type="SUPFAM" id="SSF53067">
    <property type="entry name" value="Actin-like ATPase domain"/>
    <property type="match status" value="2"/>
</dbReference>
<proteinExistence type="inferred from homology"/>
<keyword id="KW-0012">Acyltransferase</keyword>
<keyword id="KW-0963">Cytoplasm</keyword>
<keyword id="KW-0408">Iron</keyword>
<keyword id="KW-0479">Metal-binding</keyword>
<keyword id="KW-0808">Transferase</keyword>
<keyword id="KW-0819">tRNA processing</keyword>
<sequence>MLVLGIESSCDETGLALYDTGRGLLAHALHSQIAMHREYGGVVPELASRDHIRRALPLLEEVLAAGGARREDIDAIAFTQGPGLAGALLVGASIANALAFAWDKPTIGIHHLEGHLLSPLLVAEPPPFPFVALLVSGGHTQLMRVTDVGVYETLGETLDDAAGEAFDKTAKLLGLGYPGGPEVSKLAEAGTPGAVVLPRPMLHSGDLDFSFSGLKTAVLTQMKKLEAAHASGAELDRAKADLARGFVDAAVDVLVAKSLAALKKTRLKRLVVAGGVGANRQLRAALSAAAGKRGFDVHYPDLALCTDNGAMIALAGALRLARWPSQASRDYAFTVKPRWDLASLAR</sequence>
<evidence type="ECO:0000255" key="1">
    <source>
        <dbReference type="HAMAP-Rule" id="MF_01445"/>
    </source>
</evidence>
<comment type="function">
    <text evidence="1">Required for the formation of a threonylcarbamoyl group on adenosine at position 37 (t(6)A37) in tRNAs that read codons beginning with adenine. Is involved in the transfer of the threonylcarbamoyl moiety of threonylcarbamoyl-AMP (TC-AMP) to the N6 group of A37, together with TsaE and TsaB. TsaD likely plays a direct catalytic role in this reaction.</text>
</comment>
<comment type="catalytic activity">
    <reaction evidence="1">
        <text>L-threonylcarbamoyladenylate + adenosine(37) in tRNA = N(6)-L-threonylcarbamoyladenosine(37) in tRNA + AMP + H(+)</text>
        <dbReference type="Rhea" id="RHEA:37059"/>
        <dbReference type="Rhea" id="RHEA-COMP:10162"/>
        <dbReference type="Rhea" id="RHEA-COMP:10163"/>
        <dbReference type="ChEBI" id="CHEBI:15378"/>
        <dbReference type="ChEBI" id="CHEBI:73682"/>
        <dbReference type="ChEBI" id="CHEBI:74411"/>
        <dbReference type="ChEBI" id="CHEBI:74418"/>
        <dbReference type="ChEBI" id="CHEBI:456215"/>
        <dbReference type="EC" id="2.3.1.234"/>
    </reaction>
</comment>
<comment type="cofactor">
    <cofactor evidence="1">
        <name>Fe(2+)</name>
        <dbReference type="ChEBI" id="CHEBI:29033"/>
    </cofactor>
    <text evidence="1">Binds 1 Fe(2+) ion per subunit.</text>
</comment>
<comment type="subcellular location">
    <subcellularLocation>
        <location evidence="1">Cytoplasm</location>
    </subcellularLocation>
</comment>
<comment type="similarity">
    <text evidence="1">Belongs to the KAE1 / TsaD family.</text>
</comment>
<reference key="1">
    <citation type="journal article" date="2005" name="BMC Genomics">
        <title>Bacterial genome adaptation to niches: divergence of the potential virulence genes in three Burkholderia species of different survival strategies.</title>
        <authorList>
            <person name="Kim H.S."/>
            <person name="Schell M.A."/>
            <person name="Yu Y."/>
            <person name="Ulrich R.L."/>
            <person name="Sarria S.H."/>
            <person name="Nierman W.C."/>
            <person name="DeShazer D."/>
        </authorList>
    </citation>
    <scope>NUCLEOTIDE SEQUENCE [LARGE SCALE GENOMIC DNA]</scope>
    <source>
        <strain>ATCC 700388 / DSM 13276 / CCUG 48851 / CIP 106301 / E264</strain>
    </source>
</reference>
<accession>Q2T7N3</accession>
<protein>
    <recommendedName>
        <fullName evidence="1">tRNA N6-adenosine threonylcarbamoyltransferase</fullName>
        <ecNumber evidence="1">2.3.1.234</ecNumber>
    </recommendedName>
    <alternativeName>
        <fullName evidence="1">N6-L-threonylcarbamoyladenine synthase</fullName>
        <shortName evidence="1">t(6)A synthase</shortName>
    </alternativeName>
    <alternativeName>
        <fullName evidence="1">t(6)A37 threonylcarbamoyladenosine biosynthesis protein TsaD</fullName>
    </alternativeName>
    <alternativeName>
        <fullName evidence="1">tRNA threonylcarbamoyladenosine biosynthesis protein TsaD</fullName>
    </alternativeName>
</protein>
<feature type="chain" id="PRO_0000303307" description="tRNA N6-adenosine threonylcarbamoyltransferase">
    <location>
        <begin position="1"/>
        <end position="346"/>
    </location>
</feature>
<feature type="binding site" evidence="1">
    <location>
        <position position="111"/>
    </location>
    <ligand>
        <name>Fe cation</name>
        <dbReference type="ChEBI" id="CHEBI:24875"/>
    </ligand>
</feature>
<feature type="binding site" evidence="1">
    <location>
        <position position="115"/>
    </location>
    <ligand>
        <name>Fe cation</name>
        <dbReference type="ChEBI" id="CHEBI:24875"/>
    </ligand>
</feature>
<feature type="binding site" evidence="1">
    <location>
        <begin position="134"/>
        <end position="138"/>
    </location>
    <ligand>
        <name>substrate</name>
    </ligand>
</feature>
<feature type="binding site" evidence="1">
    <location>
        <position position="167"/>
    </location>
    <ligand>
        <name>substrate</name>
    </ligand>
</feature>
<feature type="binding site" evidence="1">
    <location>
        <position position="180"/>
    </location>
    <ligand>
        <name>substrate</name>
    </ligand>
</feature>
<feature type="binding site" evidence="1">
    <location>
        <position position="279"/>
    </location>
    <ligand>
        <name>substrate</name>
    </ligand>
</feature>
<feature type="binding site" evidence="1">
    <location>
        <position position="307"/>
    </location>
    <ligand>
        <name>Fe cation</name>
        <dbReference type="ChEBI" id="CHEBI:24875"/>
    </ligand>
</feature>